<comment type="interaction">
    <interactant intactId="EBI-739493">
        <id>Q6ZU52</id>
    </interactant>
    <interactant intactId="EBI-742038">
        <id>Q9P2A4</id>
        <label>ABI3</label>
    </interactant>
    <organismsDiffer>false</organismsDiffer>
    <experiments>4</experiments>
</comment>
<comment type="interaction">
    <interactant intactId="EBI-739493">
        <id>Q6ZU52</id>
    </interactant>
    <interactant intactId="EBI-11524851">
        <id>Q8NA61-2</id>
        <label>CBY2</label>
    </interactant>
    <organismsDiffer>false</organismsDiffer>
    <experiments>5</experiments>
</comment>
<comment type="interaction">
    <interactant intactId="EBI-739493">
        <id>Q6ZU52</id>
    </interactant>
    <interactant intactId="EBI-10961624">
        <id>Q2TAC2-2</id>
        <label>CCDC57</label>
    </interactant>
    <organismsDiffer>false</organismsDiffer>
    <experiments>3</experiments>
</comment>
<comment type="interaction">
    <interactant intactId="EBI-739493">
        <id>Q6ZU52</id>
    </interactant>
    <interactant intactId="EBI-725515">
        <id>O43559</id>
        <label>FRS3</label>
    </interactant>
    <organismsDiffer>false</organismsDiffer>
    <experiments>3</experiments>
</comment>
<comment type="interaction">
    <interactant intactId="EBI-739493">
        <id>Q6ZU52</id>
    </interactant>
    <interactant intactId="EBI-744302">
        <id>P14136</id>
        <label>GFAP</label>
    </interactant>
    <organismsDiffer>false</organismsDiffer>
    <experiments>5</experiments>
</comment>
<comment type="interaction">
    <interactant intactId="EBI-739493">
        <id>Q6ZU52</id>
    </interactant>
    <interactant intactId="EBI-401755">
        <id>P62993</id>
        <label>GRB2</label>
    </interactant>
    <organismsDiffer>false</organismsDiffer>
    <experiments>3</experiments>
</comment>
<comment type="interaction">
    <interactant intactId="EBI-739493">
        <id>Q6ZU52</id>
    </interactant>
    <interactant intactId="EBI-7116203">
        <id>O75031</id>
        <label>HSF2BP</label>
    </interactant>
    <organismsDiffer>false</organismsDiffer>
    <experiments>5</experiments>
</comment>
<comment type="interaction">
    <interactant intactId="EBI-739493">
        <id>Q6ZU52</id>
    </interactant>
    <interactant intactId="EBI-352682">
        <id>P04792</id>
        <label>HSPB1</label>
    </interactant>
    <organismsDiffer>false</organismsDiffer>
    <experiments>3</experiments>
</comment>
<comment type="interaction">
    <interactant intactId="EBI-739493">
        <id>Q6ZU52</id>
    </interactant>
    <interactant intactId="EBI-466029">
        <id>P42858</id>
        <label>HTT</label>
    </interactant>
    <organismsDiffer>false</organismsDiffer>
    <experiments>6</experiments>
</comment>
<comment type="interaction">
    <interactant intactId="EBI-739493">
        <id>Q6ZU52</id>
    </interactant>
    <interactant intactId="EBI-1055254">
        <id>Q8WXH2</id>
        <label>JPH3</label>
    </interactant>
    <organismsDiffer>false</organismsDiffer>
    <experiments>3</experiments>
</comment>
<comment type="interaction">
    <interactant intactId="EBI-739493">
        <id>Q6ZU52</id>
    </interactant>
    <interactant intactId="EBI-10975473">
        <id>O60333-2</id>
        <label>KIF1B</label>
    </interactant>
    <organismsDiffer>false</organismsDiffer>
    <experiments>3</experiments>
</comment>
<comment type="interaction">
    <interactant intactId="EBI-739493">
        <id>Q6ZU52</id>
    </interactant>
    <interactant intactId="EBI-948266">
        <id>O14901</id>
        <label>KLF11</label>
    </interactant>
    <organismsDiffer>false</organismsDiffer>
    <experiments>3</experiments>
</comment>
<comment type="interaction">
    <interactant intactId="EBI-739493">
        <id>Q6ZU52</id>
    </interactant>
    <interactant intactId="EBI-7950783">
        <id>Q96JP2</id>
        <label>MYO15B</label>
    </interactant>
    <organismsDiffer>false</organismsDiffer>
    <experiments>3</experiments>
</comment>
<comment type="interaction">
    <interactant intactId="EBI-739493">
        <id>Q6ZU52</id>
    </interactant>
    <interactant intactId="EBI-713635">
        <id>O43639</id>
        <label>NCK2</label>
    </interactant>
    <organismsDiffer>false</organismsDiffer>
    <experiments>7</experiments>
</comment>
<comment type="interaction">
    <interactant intactId="EBI-739493">
        <id>Q6ZU52</id>
    </interactant>
    <interactant intactId="EBI-10249760">
        <id>Q9UHB4</id>
        <label>NDOR1</label>
    </interactant>
    <organismsDiffer>false</organismsDiffer>
    <experiments>3</experiments>
</comment>
<comment type="interaction">
    <interactant intactId="EBI-739493">
        <id>Q6ZU52</id>
    </interactant>
    <interactant intactId="EBI-6190702">
        <id>P28331-2</id>
        <label>NDUFS1</label>
    </interactant>
    <organismsDiffer>false</organismsDiffer>
    <experiments>3</experiments>
</comment>
<comment type="interaction">
    <interactant intactId="EBI-739493">
        <id>Q6ZU52</id>
    </interactant>
    <interactant intactId="EBI-475646">
        <id>P07196</id>
        <label>NEFL</label>
    </interactant>
    <organismsDiffer>false</organismsDiffer>
    <experiments>3</experiments>
</comment>
<comment type="interaction">
    <interactant intactId="EBI-739493">
        <id>Q6ZU52</id>
    </interactant>
    <interactant intactId="EBI-493507">
        <id>P04150</id>
        <label>NR3C1</label>
    </interactant>
    <organismsDiffer>false</organismsDiffer>
    <experiments>2</experiments>
</comment>
<comment type="interaction">
    <interactant intactId="EBI-739493">
        <id>Q6ZU52</id>
    </interactant>
    <interactant intactId="EBI-2811583">
        <id>Q9BVL2</id>
        <label>NUP58</label>
    </interactant>
    <organismsDiffer>false</organismsDiffer>
    <experiments>3</experiments>
</comment>
<comment type="interaction">
    <interactant intactId="EBI-739493">
        <id>Q6ZU52</id>
    </interactant>
    <interactant intactId="EBI-716404">
        <id>P16284</id>
        <label>PECAM1</label>
    </interactant>
    <organismsDiffer>false</organismsDiffer>
    <experiments>3</experiments>
</comment>
<comment type="interaction">
    <interactant intactId="EBI-739493">
        <id>Q6ZU52</id>
    </interactant>
    <interactant intactId="EBI-530034">
        <id>O43189</id>
        <label>PHF1</label>
    </interactant>
    <organismsDiffer>false</organismsDiffer>
    <experiments>4</experiments>
</comment>
<comment type="interaction">
    <interactant intactId="EBI-739493">
        <id>Q6ZU52</id>
    </interactant>
    <interactant intactId="EBI-79893">
        <id>Q92569</id>
        <label>PIK3R3</label>
    </interactant>
    <organismsDiffer>false</organismsDiffer>
    <experiments>3</experiments>
</comment>
<comment type="interaction">
    <interactant intactId="EBI-739493">
        <id>Q6ZU52</id>
    </interactant>
    <interactant intactId="EBI-5452779">
        <id>Q9BUI4</id>
        <label>POLR3C</label>
    </interactant>
    <organismsDiffer>false</organismsDiffer>
    <experiments>4</experiments>
</comment>
<comment type="interaction">
    <interactant intactId="EBI-739493">
        <id>Q6ZU52</id>
    </interactant>
    <interactant intactId="EBI-752074">
        <id>P41219</id>
        <label>PRPH</label>
    </interactant>
    <organismsDiffer>false</organismsDiffer>
    <experiments>3</experiments>
</comment>
<comment type="interaction">
    <interactant intactId="EBI-739493">
        <id>Q6ZU52</id>
    </interactant>
    <interactant intactId="EBI-749195">
        <id>P60891</id>
        <label>PRPS1</label>
    </interactant>
    <organismsDiffer>false</organismsDiffer>
    <experiments>3</experiments>
</comment>
<comment type="interaction">
    <interactant intactId="EBI-739493">
        <id>Q6ZU52</id>
    </interactant>
    <interactant intactId="EBI-11984663">
        <id>Q06455-2</id>
        <label>RUNX1T1</label>
    </interactant>
    <organismsDiffer>false</organismsDiffer>
    <experiments>5</experiments>
</comment>
<comment type="interaction">
    <interactant intactId="EBI-739493">
        <id>Q6ZU52</id>
    </interactant>
    <interactant intactId="EBI-741237">
        <id>O60504</id>
        <label>SORBS3</label>
    </interactant>
    <organismsDiffer>false</organismsDiffer>
    <experiments>4</experiments>
</comment>
<comment type="interaction">
    <interactant intactId="EBI-739493">
        <id>Q6ZU52</id>
    </interactant>
    <interactant intactId="EBI-7353612">
        <id>P57075-2</id>
        <label>UBASH3A</label>
    </interactant>
    <organismsDiffer>false</organismsDiffer>
    <experiments>3</experiments>
</comment>
<comment type="interaction">
    <interactant intactId="EBI-739493">
        <id>Q6ZU52</id>
    </interactant>
    <interactant intactId="EBI-353844">
        <id>P08670</id>
        <label>VIM</label>
    </interactant>
    <organismsDiffer>false</organismsDiffer>
    <experiments>4</experiments>
</comment>
<comment type="interaction">
    <interactant intactId="EBI-739493">
        <id>Q6ZU52</id>
    </interactant>
    <interactant intactId="EBI-720609">
        <id>O76024</id>
        <label>WFS1</label>
    </interactant>
    <organismsDiffer>false</organismsDiffer>
    <experiments>3</experiments>
</comment>
<comment type="alternative products">
    <event type="alternative splicing"/>
    <isoform>
        <id>Q6ZU52-1</id>
        <name>1</name>
        <sequence type="displayed"/>
    </isoform>
    <isoform>
        <id>Q6ZU52-2</id>
        <name>2</name>
        <sequence type="described" ref="VSP_019942"/>
    </isoform>
</comment>
<comment type="sequence caution" evidence="7">
    <conflict type="erroneous initiation">
        <sequence resource="EMBL-CDS" id="BAA23704"/>
    </conflict>
</comment>
<dbReference type="EMBL" id="AB007868">
    <property type="protein sequence ID" value="BAA23704.2"/>
    <property type="status" value="ALT_INIT"/>
    <property type="molecule type" value="mRNA"/>
</dbReference>
<dbReference type="EMBL" id="AK091424">
    <property type="protein sequence ID" value="BAG52357.1"/>
    <property type="molecule type" value="mRNA"/>
</dbReference>
<dbReference type="EMBL" id="AK125983">
    <property type="protein sequence ID" value="BAC86375.1"/>
    <property type="molecule type" value="mRNA"/>
</dbReference>
<dbReference type="EMBL" id="AL096711">
    <property type="status" value="NOT_ANNOTATED_CDS"/>
    <property type="molecule type" value="Genomic_DNA"/>
</dbReference>
<dbReference type="EMBL" id="CH471051">
    <property type="protein sequence ID" value="EAW48095.1"/>
    <property type="molecule type" value="Genomic_DNA"/>
</dbReference>
<dbReference type="EMBL" id="CH471051">
    <property type="protein sequence ID" value="EAW48096.1"/>
    <property type="molecule type" value="Genomic_DNA"/>
</dbReference>
<dbReference type="EMBL" id="CH471051">
    <property type="protein sequence ID" value="EAW48098.1"/>
    <property type="molecule type" value="Genomic_DNA"/>
</dbReference>
<dbReference type="EMBL" id="BC018396">
    <property type="protein sequence ID" value="AAH18396.2"/>
    <property type="molecule type" value="mRNA"/>
</dbReference>
<dbReference type="CCDS" id="CCDS34531.1">
    <molecule id="Q6ZU52-1"/>
</dbReference>
<dbReference type="RefSeq" id="NP_055517.3">
    <molecule id="Q6ZU52-1"/>
    <property type="nucleotide sequence ID" value="NM_014702.4"/>
</dbReference>
<dbReference type="SMR" id="Q6ZU52"/>
<dbReference type="BioGRID" id="115078">
    <property type="interactions" value="60"/>
</dbReference>
<dbReference type="FunCoup" id="Q6ZU52">
    <property type="interactions" value="48"/>
</dbReference>
<dbReference type="IntAct" id="Q6ZU52">
    <property type="interactions" value="74"/>
</dbReference>
<dbReference type="MINT" id="Q6ZU52"/>
<dbReference type="STRING" id="9606.ENSP00000435150"/>
<dbReference type="GlyGen" id="Q6ZU52">
    <property type="glycosylation" value="2 sites, 1 O-linked glycan (2 sites)"/>
</dbReference>
<dbReference type="iPTMnet" id="Q6ZU52"/>
<dbReference type="PhosphoSitePlus" id="Q6ZU52"/>
<dbReference type="BioMuta" id="KIAA0408"/>
<dbReference type="DMDM" id="74749666"/>
<dbReference type="jPOST" id="Q6ZU52"/>
<dbReference type="MassIVE" id="Q6ZU52"/>
<dbReference type="PaxDb" id="9606-ENSP00000435150"/>
<dbReference type="PeptideAtlas" id="Q6ZU52"/>
<dbReference type="ProteomicsDB" id="68310">
    <molecule id="Q6ZU52-1"/>
</dbReference>
<dbReference type="ProteomicsDB" id="68311">
    <molecule id="Q6ZU52-2"/>
</dbReference>
<dbReference type="Antibodypedia" id="32770">
    <property type="antibodies" value="15 antibodies from 7 providers"/>
</dbReference>
<dbReference type="DNASU" id="9729"/>
<dbReference type="Ensembl" id="ENST00000483725.8">
    <molecule id="Q6ZU52-1"/>
    <property type="protein sequence ID" value="ENSP00000435150.2"/>
    <property type="gene ID" value="ENSG00000189367.15"/>
</dbReference>
<dbReference type="GeneID" id="9729"/>
<dbReference type="KEGG" id="hsa:9729"/>
<dbReference type="MANE-Select" id="ENST00000483725.8">
    <property type="protein sequence ID" value="ENSP00000435150.2"/>
    <property type="RefSeq nucleotide sequence ID" value="NM_014702.5"/>
    <property type="RefSeq protein sequence ID" value="NP_055517.3"/>
</dbReference>
<dbReference type="UCSC" id="uc011ebs.3">
    <molecule id="Q6ZU52-1"/>
    <property type="organism name" value="human"/>
</dbReference>
<dbReference type="AGR" id="HGNC:21636"/>
<dbReference type="CTD" id="9729"/>
<dbReference type="DisGeNET" id="9729"/>
<dbReference type="GeneCards" id="KIAA0408"/>
<dbReference type="HGNC" id="HGNC:21636">
    <property type="gene designation" value="KIAA0408"/>
</dbReference>
<dbReference type="HPA" id="ENSG00000189367">
    <property type="expression patterns" value="Tissue enhanced (brain, skeletal muscle)"/>
</dbReference>
<dbReference type="MIM" id="619236">
    <property type="type" value="gene"/>
</dbReference>
<dbReference type="neXtProt" id="NX_Q6ZU52"/>
<dbReference type="OpenTargets" id="ENSG00000189367"/>
<dbReference type="PharmGKB" id="PA134883396"/>
<dbReference type="VEuPathDB" id="HostDB:ENSG00000189367"/>
<dbReference type="eggNOG" id="ENOG502RJ9I">
    <property type="taxonomic scope" value="Eukaryota"/>
</dbReference>
<dbReference type="GeneTree" id="ENSGT00390000001962"/>
<dbReference type="HOGENOM" id="CLU_024871_0_0_1"/>
<dbReference type="InParanoid" id="Q6ZU52"/>
<dbReference type="OMA" id="MPNVINM"/>
<dbReference type="OrthoDB" id="9519728at2759"/>
<dbReference type="PAN-GO" id="Q6ZU52">
    <property type="GO annotations" value="0 GO annotations based on evolutionary models"/>
</dbReference>
<dbReference type="PhylomeDB" id="Q6ZU52"/>
<dbReference type="TreeFam" id="TF336502"/>
<dbReference type="PathwayCommons" id="Q6ZU52"/>
<dbReference type="SignaLink" id="Q6ZU52"/>
<dbReference type="BioGRID-ORCS" id="9729">
    <property type="hits" value="7 hits in 1146 CRISPR screens"/>
</dbReference>
<dbReference type="GenomeRNAi" id="9729"/>
<dbReference type="Pharos" id="Q6ZU52">
    <property type="development level" value="Tdark"/>
</dbReference>
<dbReference type="PRO" id="PR:Q6ZU52"/>
<dbReference type="Proteomes" id="UP000005640">
    <property type="component" value="Chromosome 6"/>
</dbReference>
<dbReference type="RNAct" id="Q6ZU52">
    <property type="molecule type" value="protein"/>
</dbReference>
<dbReference type="Bgee" id="ENSG00000189367">
    <property type="expression patterns" value="Expressed in cortical plate and 103 other cell types or tissues"/>
</dbReference>
<dbReference type="ExpressionAtlas" id="Q6ZU52">
    <property type="expression patterns" value="baseline and differential"/>
</dbReference>
<dbReference type="InterPro" id="IPR027882">
    <property type="entry name" value="SOGA1/2-like_CC"/>
</dbReference>
<dbReference type="PANTHER" id="PTHR15705">
    <property type="entry name" value="MCG7194, ISOFORM CRA_A"/>
    <property type="match status" value="1"/>
</dbReference>
<dbReference type="PANTHER" id="PTHR15705:SF1">
    <property type="entry name" value="RIKEN CDNA 9330159F19 GENE"/>
    <property type="match status" value="1"/>
</dbReference>
<dbReference type="Pfam" id="PF14818">
    <property type="entry name" value="SOGA1-2-like_CC"/>
    <property type="match status" value="1"/>
</dbReference>
<sequence length="694" mass="79163">MDLHKQWENTETNWHKEKMELLDQFDNERKEWESQWKIMQKKIEELCREVKLWRKININESAKIIDLYHEKTIPEKVIESSPNYPDLGQSEFIRTNHKDGLRKENKREQSLVSGGNQMCKEQKATKKSKVGFLDPLATDNQKECEAWPDLRTSEEDSKSCSGALSTALEELAKVSEELCSFQEEIRKRSNHRRMKSDSFLQEMPNVTNIPHGDPMINNDQCILPISLEKEKQKNRKNLSCTNVLQSNSTKKCGIDTIDLKRNETPPVPPPRSTSRNFPSSDSEQAYERWKERLDHNSWVPHEGRSKRNYNPHFPLRQQEMSMLYPNEGKTSKDGIIFSSLVPEVKIDSKPPSNEDVGLSMWSCDIGIGAKRSPSTSWFQKTCSTPSNPKYEMVIPDHPAKSHPDLHVSNDCSSSVAESSSPLRNFSCGFERTTRNEKLAAKTDEFNRTVFRTDRNCQAIQQNHSCSKSSEDLKPCDTSSTHTGSISQSNDVSGIWKTNAHMPVPMENVPDNPTKKSTTGLVRQMQGHLSPRSYRNMLHEHDWRPSNLSGRPRSADPRSNYGVVEKLLKTYETATESALQNSKCFQDNWTKCNSDVSGGATLSQHLEMLQMEQQFQQKTAVWGGQEVKQGIDPKKITEESMSVNASHGKGFSRPARPANRRLPSRWASRSPSAPPALRRTTHNYTISLRSEALMV</sequence>
<keyword id="KW-0025">Alternative splicing</keyword>
<keyword id="KW-0175">Coiled coil</keyword>
<keyword id="KW-1267">Proteomics identification</keyword>
<keyword id="KW-1185">Reference proteome</keyword>
<evidence type="ECO:0000255" key="1"/>
<evidence type="ECO:0000256" key="2">
    <source>
        <dbReference type="SAM" id="MobiDB-lite"/>
    </source>
</evidence>
<evidence type="ECO:0000269" key="3">
    <source>
    </source>
</evidence>
<evidence type="ECO:0000269" key="4">
    <source>
    </source>
</evidence>
<evidence type="ECO:0000269" key="5">
    <source ref="4"/>
</evidence>
<evidence type="ECO:0000303" key="6">
    <source>
    </source>
</evidence>
<evidence type="ECO:0000305" key="7"/>
<accession>Q6ZU52</accession>
<accession>B3KRE5</accession>
<accession>E1P573</accession>
<accession>O43158</accession>
<accession>Q5TF20</accession>
<accession>Q7L2M2</accession>
<proteinExistence type="evidence at protein level"/>
<protein>
    <recommendedName>
        <fullName>Uncharacterized protein KIAA0408</fullName>
    </recommendedName>
</protein>
<gene>
    <name type="primary">KIAA0408</name>
</gene>
<organism>
    <name type="scientific">Homo sapiens</name>
    <name type="common">Human</name>
    <dbReference type="NCBI Taxonomy" id="9606"/>
    <lineage>
        <taxon>Eukaryota</taxon>
        <taxon>Metazoa</taxon>
        <taxon>Chordata</taxon>
        <taxon>Craniata</taxon>
        <taxon>Vertebrata</taxon>
        <taxon>Euteleostomi</taxon>
        <taxon>Mammalia</taxon>
        <taxon>Eutheria</taxon>
        <taxon>Euarchontoglires</taxon>
        <taxon>Primates</taxon>
        <taxon>Haplorrhini</taxon>
        <taxon>Catarrhini</taxon>
        <taxon>Hominidae</taxon>
        <taxon>Homo</taxon>
    </lineage>
</organism>
<feature type="chain" id="PRO_0000247177" description="Uncharacterized protein KIAA0408">
    <location>
        <begin position="1"/>
        <end position="694"/>
    </location>
</feature>
<feature type="region of interest" description="Disordered" evidence="2">
    <location>
        <begin position="259"/>
        <end position="286"/>
    </location>
</feature>
<feature type="region of interest" description="Disordered" evidence="2">
    <location>
        <begin position="461"/>
        <end position="490"/>
    </location>
</feature>
<feature type="region of interest" description="Disordered" evidence="2">
    <location>
        <begin position="643"/>
        <end position="680"/>
    </location>
</feature>
<feature type="coiled-coil region" evidence="1">
    <location>
        <begin position="15"/>
        <end position="51"/>
    </location>
</feature>
<feature type="compositionally biased region" description="Polar residues" evidence="2">
    <location>
        <begin position="272"/>
        <end position="283"/>
    </location>
</feature>
<feature type="compositionally biased region" description="Polar residues" evidence="2">
    <location>
        <begin position="476"/>
        <end position="490"/>
    </location>
</feature>
<feature type="compositionally biased region" description="Low complexity" evidence="2">
    <location>
        <begin position="663"/>
        <end position="677"/>
    </location>
</feature>
<feature type="splice variant" id="VSP_019942" description="In isoform 2." evidence="6">
    <location>
        <begin position="1"/>
        <end position="117"/>
    </location>
</feature>
<feature type="sequence variant" id="VAR_027082" description="In dbSNP:rs3734447." evidence="3 4 5">
    <original>S</original>
    <variation>R</variation>
    <location>
        <position position="61"/>
    </location>
</feature>
<feature type="sequence variant" id="VAR_049510" description="In dbSNP:rs2236026.">
    <original>S</original>
    <variation>L</variation>
    <location>
        <position position="331"/>
    </location>
</feature>
<name>K0408_HUMAN</name>
<reference key="1">
    <citation type="journal article" date="1997" name="DNA Res.">
        <title>Prediction of the coding sequences of unidentified human genes. VIII. 78 new cDNA clones from brain which code for large proteins in vitro.</title>
        <authorList>
            <person name="Ishikawa K."/>
            <person name="Nagase T."/>
            <person name="Nakajima D."/>
            <person name="Seki N."/>
            <person name="Ohira M."/>
            <person name="Miyajima N."/>
            <person name="Tanaka A."/>
            <person name="Kotani H."/>
            <person name="Nomura N."/>
            <person name="Ohara O."/>
        </authorList>
    </citation>
    <scope>NUCLEOTIDE SEQUENCE [LARGE SCALE MRNA] (ISOFORM 2)</scope>
    <source>
        <tissue>Brain</tissue>
    </source>
</reference>
<reference key="2">
    <citation type="journal article" date="2004" name="Nat. Genet.">
        <title>Complete sequencing and characterization of 21,243 full-length human cDNAs.</title>
        <authorList>
            <person name="Ota T."/>
            <person name="Suzuki Y."/>
            <person name="Nishikawa T."/>
            <person name="Otsuki T."/>
            <person name="Sugiyama T."/>
            <person name="Irie R."/>
            <person name="Wakamatsu A."/>
            <person name="Hayashi K."/>
            <person name="Sato H."/>
            <person name="Nagai K."/>
            <person name="Kimura K."/>
            <person name="Makita H."/>
            <person name="Sekine M."/>
            <person name="Obayashi M."/>
            <person name="Nishi T."/>
            <person name="Shibahara T."/>
            <person name="Tanaka T."/>
            <person name="Ishii S."/>
            <person name="Yamamoto J."/>
            <person name="Saito K."/>
            <person name="Kawai Y."/>
            <person name="Isono Y."/>
            <person name="Nakamura Y."/>
            <person name="Nagahari K."/>
            <person name="Murakami K."/>
            <person name="Yasuda T."/>
            <person name="Iwayanagi T."/>
            <person name="Wagatsuma M."/>
            <person name="Shiratori A."/>
            <person name="Sudo H."/>
            <person name="Hosoiri T."/>
            <person name="Kaku Y."/>
            <person name="Kodaira H."/>
            <person name="Kondo H."/>
            <person name="Sugawara M."/>
            <person name="Takahashi M."/>
            <person name="Kanda K."/>
            <person name="Yokoi T."/>
            <person name="Furuya T."/>
            <person name="Kikkawa E."/>
            <person name="Omura Y."/>
            <person name="Abe K."/>
            <person name="Kamihara K."/>
            <person name="Katsuta N."/>
            <person name="Sato K."/>
            <person name="Tanikawa M."/>
            <person name="Yamazaki M."/>
            <person name="Ninomiya K."/>
            <person name="Ishibashi T."/>
            <person name="Yamashita H."/>
            <person name="Murakawa K."/>
            <person name="Fujimori K."/>
            <person name="Tanai H."/>
            <person name="Kimata M."/>
            <person name="Watanabe M."/>
            <person name="Hiraoka S."/>
            <person name="Chiba Y."/>
            <person name="Ishida S."/>
            <person name="Ono Y."/>
            <person name="Takiguchi S."/>
            <person name="Watanabe S."/>
            <person name="Yosida M."/>
            <person name="Hotuta T."/>
            <person name="Kusano J."/>
            <person name="Kanehori K."/>
            <person name="Takahashi-Fujii A."/>
            <person name="Hara H."/>
            <person name="Tanase T.-O."/>
            <person name="Nomura Y."/>
            <person name="Togiya S."/>
            <person name="Komai F."/>
            <person name="Hara R."/>
            <person name="Takeuchi K."/>
            <person name="Arita M."/>
            <person name="Imose N."/>
            <person name="Musashino K."/>
            <person name="Yuuki H."/>
            <person name="Oshima A."/>
            <person name="Sasaki N."/>
            <person name="Aotsuka S."/>
            <person name="Yoshikawa Y."/>
            <person name="Matsunawa H."/>
            <person name="Ichihara T."/>
            <person name="Shiohata N."/>
            <person name="Sano S."/>
            <person name="Moriya S."/>
            <person name="Momiyama H."/>
            <person name="Satoh N."/>
            <person name="Takami S."/>
            <person name="Terashima Y."/>
            <person name="Suzuki O."/>
            <person name="Nakagawa S."/>
            <person name="Senoh A."/>
            <person name="Mizoguchi H."/>
            <person name="Goto Y."/>
            <person name="Shimizu F."/>
            <person name="Wakebe H."/>
            <person name="Hishigaki H."/>
            <person name="Watanabe T."/>
            <person name="Sugiyama A."/>
            <person name="Takemoto M."/>
            <person name="Kawakami B."/>
            <person name="Yamazaki M."/>
            <person name="Watanabe K."/>
            <person name="Kumagai A."/>
            <person name="Itakura S."/>
            <person name="Fukuzumi Y."/>
            <person name="Fujimori Y."/>
            <person name="Komiyama M."/>
            <person name="Tashiro H."/>
            <person name="Tanigami A."/>
            <person name="Fujiwara T."/>
            <person name="Ono T."/>
            <person name="Yamada K."/>
            <person name="Fujii Y."/>
            <person name="Ozaki K."/>
            <person name="Hirao M."/>
            <person name="Ohmori Y."/>
            <person name="Kawabata A."/>
            <person name="Hikiji T."/>
            <person name="Kobatake N."/>
            <person name="Inagaki H."/>
            <person name="Ikema Y."/>
            <person name="Okamoto S."/>
            <person name="Okitani R."/>
            <person name="Kawakami T."/>
            <person name="Noguchi S."/>
            <person name="Itoh T."/>
            <person name="Shigeta K."/>
            <person name="Senba T."/>
            <person name="Matsumura K."/>
            <person name="Nakajima Y."/>
            <person name="Mizuno T."/>
            <person name="Morinaga M."/>
            <person name="Sasaki M."/>
            <person name="Togashi T."/>
            <person name="Oyama M."/>
            <person name="Hata H."/>
            <person name="Watanabe M."/>
            <person name="Komatsu T."/>
            <person name="Mizushima-Sugano J."/>
            <person name="Satoh T."/>
            <person name="Shirai Y."/>
            <person name="Takahashi Y."/>
            <person name="Nakagawa K."/>
            <person name="Okumura K."/>
            <person name="Nagase T."/>
            <person name="Nomura N."/>
            <person name="Kikuchi H."/>
            <person name="Masuho Y."/>
            <person name="Yamashita R."/>
            <person name="Nakai K."/>
            <person name="Yada T."/>
            <person name="Nakamura Y."/>
            <person name="Ohara O."/>
            <person name="Isogai T."/>
            <person name="Sugano S."/>
        </authorList>
    </citation>
    <scope>NUCLEOTIDE SEQUENCE [LARGE SCALE MRNA] (ISOFORM 1)</scope>
    <scope>VARIANT ARG-61</scope>
    <source>
        <tissue>Brain</tissue>
        <tissue>Testis</tissue>
    </source>
</reference>
<reference key="3">
    <citation type="journal article" date="2003" name="Nature">
        <title>The DNA sequence and analysis of human chromosome 6.</title>
        <authorList>
            <person name="Mungall A.J."/>
            <person name="Palmer S.A."/>
            <person name="Sims S.K."/>
            <person name="Edwards C.A."/>
            <person name="Ashurst J.L."/>
            <person name="Wilming L."/>
            <person name="Jones M.C."/>
            <person name="Horton R."/>
            <person name="Hunt S.E."/>
            <person name="Scott C.E."/>
            <person name="Gilbert J.G.R."/>
            <person name="Clamp M.E."/>
            <person name="Bethel G."/>
            <person name="Milne S."/>
            <person name="Ainscough R."/>
            <person name="Almeida J.P."/>
            <person name="Ambrose K.D."/>
            <person name="Andrews T.D."/>
            <person name="Ashwell R.I.S."/>
            <person name="Babbage A.K."/>
            <person name="Bagguley C.L."/>
            <person name="Bailey J."/>
            <person name="Banerjee R."/>
            <person name="Barker D.J."/>
            <person name="Barlow K.F."/>
            <person name="Bates K."/>
            <person name="Beare D.M."/>
            <person name="Beasley H."/>
            <person name="Beasley O."/>
            <person name="Bird C.P."/>
            <person name="Blakey S.E."/>
            <person name="Bray-Allen S."/>
            <person name="Brook J."/>
            <person name="Brown A.J."/>
            <person name="Brown J.Y."/>
            <person name="Burford D.C."/>
            <person name="Burrill W."/>
            <person name="Burton J."/>
            <person name="Carder C."/>
            <person name="Carter N.P."/>
            <person name="Chapman J.C."/>
            <person name="Clark S.Y."/>
            <person name="Clark G."/>
            <person name="Clee C.M."/>
            <person name="Clegg S."/>
            <person name="Cobley V."/>
            <person name="Collier R.E."/>
            <person name="Collins J.E."/>
            <person name="Colman L.K."/>
            <person name="Corby N.R."/>
            <person name="Coville G.J."/>
            <person name="Culley K.M."/>
            <person name="Dhami P."/>
            <person name="Davies J."/>
            <person name="Dunn M."/>
            <person name="Earthrowl M.E."/>
            <person name="Ellington A.E."/>
            <person name="Evans K.A."/>
            <person name="Faulkner L."/>
            <person name="Francis M.D."/>
            <person name="Frankish A."/>
            <person name="Frankland J."/>
            <person name="French L."/>
            <person name="Garner P."/>
            <person name="Garnett J."/>
            <person name="Ghori M.J."/>
            <person name="Gilby L.M."/>
            <person name="Gillson C.J."/>
            <person name="Glithero R.J."/>
            <person name="Grafham D.V."/>
            <person name="Grant M."/>
            <person name="Gribble S."/>
            <person name="Griffiths C."/>
            <person name="Griffiths M.N.D."/>
            <person name="Hall R."/>
            <person name="Halls K.S."/>
            <person name="Hammond S."/>
            <person name="Harley J.L."/>
            <person name="Hart E.A."/>
            <person name="Heath P.D."/>
            <person name="Heathcott R."/>
            <person name="Holmes S.J."/>
            <person name="Howden P.J."/>
            <person name="Howe K.L."/>
            <person name="Howell G.R."/>
            <person name="Huckle E."/>
            <person name="Humphray S.J."/>
            <person name="Humphries M.D."/>
            <person name="Hunt A.R."/>
            <person name="Johnson C.M."/>
            <person name="Joy A.A."/>
            <person name="Kay M."/>
            <person name="Keenan S.J."/>
            <person name="Kimberley A.M."/>
            <person name="King A."/>
            <person name="Laird G.K."/>
            <person name="Langford C."/>
            <person name="Lawlor S."/>
            <person name="Leongamornlert D.A."/>
            <person name="Leversha M."/>
            <person name="Lloyd C.R."/>
            <person name="Lloyd D.M."/>
            <person name="Loveland J.E."/>
            <person name="Lovell J."/>
            <person name="Martin S."/>
            <person name="Mashreghi-Mohammadi M."/>
            <person name="Maslen G.L."/>
            <person name="Matthews L."/>
            <person name="McCann O.T."/>
            <person name="McLaren S.J."/>
            <person name="McLay K."/>
            <person name="McMurray A."/>
            <person name="Moore M.J.F."/>
            <person name="Mullikin J.C."/>
            <person name="Niblett D."/>
            <person name="Nickerson T."/>
            <person name="Novik K.L."/>
            <person name="Oliver K."/>
            <person name="Overton-Larty E.K."/>
            <person name="Parker A."/>
            <person name="Patel R."/>
            <person name="Pearce A.V."/>
            <person name="Peck A.I."/>
            <person name="Phillimore B.J.C.T."/>
            <person name="Phillips S."/>
            <person name="Plumb R.W."/>
            <person name="Porter K.M."/>
            <person name="Ramsey Y."/>
            <person name="Ranby S.A."/>
            <person name="Rice C.M."/>
            <person name="Ross M.T."/>
            <person name="Searle S.M."/>
            <person name="Sehra H.K."/>
            <person name="Sheridan E."/>
            <person name="Skuce C.D."/>
            <person name="Smith S."/>
            <person name="Smith M."/>
            <person name="Spraggon L."/>
            <person name="Squares S.L."/>
            <person name="Steward C.A."/>
            <person name="Sycamore N."/>
            <person name="Tamlyn-Hall G."/>
            <person name="Tester J."/>
            <person name="Theaker A.J."/>
            <person name="Thomas D.W."/>
            <person name="Thorpe A."/>
            <person name="Tracey A."/>
            <person name="Tromans A."/>
            <person name="Tubby B."/>
            <person name="Wall M."/>
            <person name="Wallis J.M."/>
            <person name="West A.P."/>
            <person name="White S.S."/>
            <person name="Whitehead S.L."/>
            <person name="Whittaker H."/>
            <person name="Wild A."/>
            <person name="Willey D.J."/>
            <person name="Wilmer T.E."/>
            <person name="Wood J.M."/>
            <person name="Wray P.W."/>
            <person name="Wyatt J.C."/>
            <person name="Young L."/>
            <person name="Younger R.M."/>
            <person name="Bentley D.R."/>
            <person name="Coulson A."/>
            <person name="Durbin R.M."/>
            <person name="Hubbard T."/>
            <person name="Sulston J.E."/>
            <person name="Dunham I."/>
            <person name="Rogers J."/>
            <person name="Beck S."/>
        </authorList>
    </citation>
    <scope>NUCLEOTIDE SEQUENCE [LARGE SCALE GENOMIC DNA]</scope>
</reference>
<reference key="4">
    <citation type="submission" date="2005-09" db="EMBL/GenBank/DDBJ databases">
        <authorList>
            <person name="Mural R.J."/>
            <person name="Istrail S."/>
            <person name="Sutton G.G."/>
            <person name="Florea L."/>
            <person name="Halpern A.L."/>
            <person name="Mobarry C.M."/>
            <person name="Lippert R."/>
            <person name="Walenz B."/>
            <person name="Shatkay H."/>
            <person name="Dew I."/>
            <person name="Miller J.R."/>
            <person name="Flanigan M.J."/>
            <person name="Edwards N.J."/>
            <person name="Bolanos R."/>
            <person name="Fasulo D."/>
            <person name="Halldorsson B.V."/>
            <person name="Hannenhalli S."/>
            <person name="Turner R."/>
            <person name="Yooseph S."/>
            <person name="Lu F."/>
            <person name="Nusskern D.R."/>
            <person name="Shue B.C."/>
            <person name="Zheng X.H."/>
            <person name="Zhong F."/>
            <person name="Delcher A.L."/>
            <person name="Huson D.H."/>
            <person name="Kravitz S.A."/>
            <person name="Mouchard L."/>
            <person name="Reinert K."/>
            <person name="Remington K.A."/>
            <person name="Clark A.G."/>
            <person name="Waterman M.S."/>
            <person name="Eichler E.E."/>
            <person name="Adams M.D."/>
            <person name="Hunkapiller M.W."/>
            <person name="Myers E.W."/>
            <person name="Venter J.C."/>
        </authorList>
    </citation>
    <scope>NUCLEOTIDE SEQUENCE [LARGE SCALE GENOMIC DNA]</scope>
    <scope>VARIANT ARG-61</scope>
</reference>
<reference key="5">
    <citation type="journal article" date="2004" name="Genome Res.">
        <title>The status, quality, and expansion of the NIH full-length cDNA project: the Mammalian Gene Collection (MGC).</title>
        <authorList>
            <consortium name="The MGC Project Team"/>
        </authorList>
    </citation>
    <scope>NUCLEOTIDE SEQUENCE [LARGE SCALE MRNA] (ISOFORM 1)</scope>
    <scope>VARIANT ARG-61</scope>
    <source>
        <tissue>Brain</tissue>
    </source>
</reference>